<accession>Q87A28</accession>
<comment type="function">
    <text evidence="1">Forms part of the ribosomal stalk which helps the ribosome interact with GTP-bound translation factors.</text>
</comment>
<comment type="subunit">
    <text evidence="1">Part of the ribosomal stalk of the 50S ribosomal subunit. Interacts with L10 and the large rRNA to form the base of the stalk. L10 forms an elongated spine to which L12 dimers bind in a sequential fashion forming a multimeric L10(L12)X complex.</text>
</comment>
<comment type="PTM">
    <text evidence="1">One or more lysine residues are methylated.</text>
</comment>
<comment type="similarity">
    <text evidence="1">Belongs to the universal ribosomal protein uL11 family.</text>
</comment>
<dbReference type="EMBL" id="AE009442">
    <property type="protein sequence ID" value="AAO29834.1"/>
    <property type="molecule type" value="Genomic_DNA"/>
</dbReference>
<dbReference type="RefSeq" id="WP_011098328.1">
    <property type="nucleotide sequence ID" value="NC_004556.1"/>
</dbReference>
<dbReference type="SMR" id="Q87A28"/>
<dbReference type="GeneID" id="93905866"/>
<dbReference type="KEGG" id="xft:PD_2005"/>
<dbReference type="HOGENOM" id="CLU_074237_2_0_6"/>
<dbReference type="Proteomes" id="UP000002516">
    <property type="component" value="Chromosome"/>
</dbReference>
<dbReference type="GO" id="GO:0022625">
    <property type="term" value="C:cytosolic large ribosomal subunit"/>
    <property type="evidence" value="ECO:0007669"/>
    <property type="project" value="TreeGrafter"/>
</dbReference>
<dbReference type="GO" id="GO:0070180">
    <property type="term" value="F:large ribosomal subunit rRNA binding"/>
    <property type="evidence" value="ECO:0007669"/>
    <property type="project" value="UniProtKB-UniRule"/>
</dbReference>
<dbReference type="GO" id="GO:0003735">
    <property type="term" value="F:structural constituent of ribosome"/>
    <property type="evidence" value="ECO:0007669"/>
    <property type="project" value="InterPro"/>
</dbReference>
<dbReference type="GO" id="GO:0006412">
    <property type="term" value="P:translation"/>
    <property type="evidence" value="ECO:0007669"/>
    <property type="project" value="UniProtKB-UniRule"/>
</dbReference>
<dbReference type="CDD" id="cd00349">
    <property type="entry name" value="Ribosomal_L11"/>
    <property type="match status" value="1"/>
</dbReference>
<dbReference type="FunFam" id="1.10.10.250:FF:000001">
    <property type="entry name" value="50S ribosomal protein L11"/>
    <property type="match status" value="1"/>
</dbReference>
<dbReference type="FunFam" id="3.30.1550.10:FF:000001">
    <property type="entry name" value="50S ribosomal protein L11"/>
    <property type="match status" value="1"/>
</dbReference>
<dbReference type="Gene3D" id="1.10.10.250">
    <property type="entry name" value="Ribosomal protein L11, C-terminal domain"/>
    <property type="match status" value="1"/>
</dbReference>
<dbReference type="Gene3D" id="3.30.1550.10">
    <property type="entry name" value="Ribosomal protein L11/L12, N-terminal domain"/>
    <property type="match status" value="1"/>
</dbReference>
<dbReference type="HAMAP" id="MF_00736">
    <property type="entry name" value="Ribosomal_uL11"/>
    <property type="match status" value="1"/>
</dbReference>
<dbReference type="InterPro" id="IPR000911">
    <property type="entry name" value="Ribosomal_uL11"/>
</dbReference>
<dbReference type="InterPro" id="IPR006519">
    <property type="entry name" value="Ribosomal_uL11_bac-typ"/>
</dbReference>
<dbReference type="InterPro" id="IPR020783">
    <property type="entry name" value="Ribosomal_uL11_C"/>
</dbReference>
<dbReference type="InterPro" id="IPR036769">
    <property type="entry name" value="Ribosomal_uL11_C_sf"/>
</dbReference>
<dbReference type="InterPro" id="IPR020785">
    <property type="entry name" value="Ribosomal_uL11_CS"/>
</dbReference>
<dbReference type="InterPro" id="IPR020784">
    <property type="entry name" value="Ribosomal_uL11_N"/>
</dbReference>
<dbReference type="InterPro" id="IPR036796">
    <property type="entry name" value="Ribosomal_uL11_N_sf"/>
</dbReference>
<dbReference type="NCBIfam" id="TIGR01632">
    <property type="entry name" value="L11_bact"/>
    <property type="match status" value="1"/>
</dbReference>
<dbReference type="PANTHER" id="PTHR11661">
    <property type="entry name" value="60S RIBOSOMAL PROTEIN L12"/>
    <property type="match status" value="1"/>
</dbReference>
<dbReference type="PANTHER" id="PTHR11661:SF1">
    <property type="entry name" value="LARGE RIBOSOMAL SUBUNIT PROTEIN UL11M"/>
    <property type="match status" value="1"/>
</dbReference>
<dbReference type="Pfam" id="PF00298">
    <property type="entry name" value="Ribosomal_L11"/>
    <property type="match status" value="1"/>
</dbReference>
<dbReference type="Pfam" id="PF03946">
    <property type="entry name" value="Ribosomal_L11_N"/>
    <property type="match status" value="1"/>
</dbReference>
<dbReference type="SMART" id="SM00649">
    <property type="entry name" value="RL11"/>
    <property type="match status" value="1"/>
</dbReference>
<dbReference type="SUPFAM" id="SSF54747">
    <property type="entry name" value="Ribosomal L11/L12e N-terminal domain"/>
    <property type="match status" value="1"/>
</dbReference>
<dbReference type="SUPFAM" id="SSF46906">
    <property type="entry name" value="Ribosomal protein L11, C-terminal domain"/>
    <property type="match status" value="1"/>
</dbReference>
<dbReference type="PROSITE" id="PS00359">
    <property type="entry name" value="RIBOSOMAL_L11"/>
    <property type="match status" value="1"/>
</dbReference>
<reference key="1">
    <citation type="journal article" date="2003" name="J. Bacteriol.">
        <title>Comparative analyses of the complete genome sequences of Pierce's disease and citrus variegated chlorosis strains of Xylella fastidiosa.</title>
        <authorList>
            <person name="Van Sluys M.A."/>
            <person name="de Oliveira M.C."/>
            <person name="Monteiro-Vitorello C.B."/>
            <person name="Miyaki C.Y."/>
            <person name="Furlan L.R."/>
            <person name="Camargo L.E.A."/>
            <person name="da Silva A.C.R."/>
            <person name="Moon D.H."/>
            <person name="Takita M.A."/>
            <person name="Lemos E.G.M."/>
            <person name="Machado M.A."/>
            <person name="Ferro M.I.T."/>
            <person name="da Silva F.R."/>
            <person name="Goldman M.H.S."/>
            <person name="Goldman G.H."/>
            <person name="Lemos M.V.F."/>
            <person name="El-Dorry H."/>
            <person name="Tsai S.M."/>
            <person name="Carrer H."/>
            <person name="Carraro D.M."/>
            <person name="de Oliveira R.C."/>
            <person name="Nunes L.R."/>
            <person name="Siqueira W.J."/>
            <person name="Coutinho L.L."/>
            <person name="Kimura E.T."/>
            <person name="Ferro E.S."/>
            <person name="Harakava R."/>
            <person name="Kuramae E.E."/>
            <person name="Marino C.L."/>
            <person name="Giglioti E."/>
            <person name="Abreu I.L."/>
            <person name="Alves L.M.C."/>
            <person name="do Amaral A.M."/>
            <person name="Baia G.S."/>
            <person name="Blanco S.R."/>
            <person name="Brito M.S."/>
            <person name="Cannavan F.S."/>
            <person name="Celestino A.V."/>
            <person name="da Cunha A.F."/>
            <person name="Fenille R.C."/>
            <person name="Ferro J.A."/>
            <person name="Formighieri E.F."/>
            <person name="Kishi L.T."/>
            <person name="Leoni S.G."/>
            <person name="Oliveira A.R."/>
            <person name="Rosa V.E. Jr."/>
            <person name="Sassaki F.T."/>
            <person name="Sena J.A.D."/>
            <person name="de Souza A.A."/>
            <person name="Truffi D."/>
            <person name="Tsukumo F."/>
            <person name="Yanai G.M."/>
            <person name="Zaros L.G."/>
            <person name="Civerolo E.L."/>
            <person name="Simpson A.J.G."/>
            <person name="Almeida N.F. Jr."/>
            <person name="Setubal J.C."/>
            <person name="Kitajima J.P."/>
        </authorList>
    </citation>
    <scope>NUCLEOTIDE SEQUENCE [LARGE SCALE GENOMIC DNA]</scope>
    <source>
        <strain>Temecula1 / ATCC 700964</strain>
    </source>
</reference>
<keyword id="KW-0488">Methylation</keyword>
<keyword id="KW-1185">Reference proteome</keyword>
<keyword id="KW-0687">Ribonucleoprotein</keyword>
<keyword id="KW-0689">Ribosomal protein</keyword>
<keyword id="KW-0694">RNA-binding</keyword>
<keyword id="KW-0699">rRNA-binding</keyword>
<sequence length="142" mass="15055">MAKKVTAYIKLQVKAGQASPSPPVGPALGQRGLNIMDFCKAFNAGTQKIEQGLPIPVVITAYSDRTFTFITKSPPASILLKKIVGIQSGSKRPNTEKVGKVTRKQLEDIAKTKELDMTAADLDAAVRTIAGSARSMGLVVEG</sequence>
<gene>
    <name evidence="1" type="primary">rplK</name>
    <name type="ordered locus">PD_2005</name>
</gene>
<proteinExistence type="inferred from homology"/>
<organism>
    <name type="scientific">Xylella fastidiosa (strain Temecula1 / ATCC 700964)</name>
    <dbReference type="NCBI Taxonomy" id="183190"/>
    <lineage>
        <taxon>Bacteria</taxon>
        <taxon>Pseudomonadati</taxon>
        <taxon>Pseudomonadota</taxon>
        <taxon>Gammaproteobacteria</taxon>
        <taxon>Lysobacterales</taxon>
        <taxon>Lysobacteraceae</taxon>
        <taxon>Xylella</taxon>
    </lineage>
</organism>
<protein>
    <recommendedName>
        <fullName evidence="1">Large ribosomal subunit protein uL11</fullName>
    </recommendedName>
    <alternativeName>
        <fullName evidence="2">50S ribosomal protein L11</fullName>
    </alternativeName>
</protein>
<evidence type="ECO:0000255" key="1">
    <source>
        <dbReference type="HAMAP-Rule" id="MF_00736"/>
    </source>
</evidence>
<evidence type="ECO:0000305" key="2"/>
<feature type="chain" id="PRO_0000104417" description="Large ribosomal subunit protein uL11">
    <location>
        <begin position="1"/>
        <end position="142"/>
    </location>
</feature>
<name>RL11_XYLFT</name>